<dbReference type="EMBL" id="U51350">
    <property type="protein sequence ID" value="AAB38569.1"/>
    <property type="molecule type" value="Genomic_DNA"/>
</dbReference>
<dbReference type="EMBL" id="U51369">
    <property type="protein sequence ID" value="AAB38587.1"/>
    <property type="molecule type" value="Genomic_DNA"/>
</dbReference>
<dbReference type="SMR" id="O13241"/>
<dbReference type="GO" id="GO:0005615">
    <property type="term" value="C:extracellular space"/>
    <property type="evidence" value="ECO:0007669"/>
    <property type="project" value="TreeGrafter"/>
</dbReference>
<dbReference type="GO" id="GO:0005886">
    <property type="term" value="C:plasma membrane"/>
    <property type="evidence" value="ECO:0007669"/>
    <property type="project" value="UniProtKB-SubCell"/>
</dbReference>
<dbReference type="GO" id="GO:0005509">
    <property type="term" value="F:calcium ion binding"/>
    <property type="evidence" value="ECO:0007669"/>
    <property type="project" value="TreeGrafter"/>
</dbReference>
<dbReference type="GO" id="GO:0005113">
    <property type="term" value="F:patched binding"/>
    <property type="evidence" value="ECO:0007669"/>
    <property type="project" value="TreeGrafter"/>
</dbReference>
<dbReference type="GO" id="GO:0008233">
    <property type="term" value="F:peptidase activity"/>
    <property type="evidence" value="ECO:0007669"/>
    <property type="project" value="UniProtKB-KW"/>
</dbReference>
<dbReference type="GO" id="GO:0048513">
    <property type="term" value="P:animal organ development"/>
    <property type="evidence" value="ECO:0007669"/>
    <property type="project" value="UniProtKB-ARBA"/>
</dbReference>
<dbReference type="GO" id="GO:0048468">
    <property type="term" value="P:cell development"/>
    <property type="evidence" value="ECO:0007669"/>
    <property type="project" value="UniProtKB-ARBA"/>
</dbReference>
<dbReference type="GO" id="GO:0001708">
    <property type="term" value="P:cell fate specification"/>
    <property type="evidence" value="ECO:0007669"/>
    <property type="project" value="TreeGrafter"/>
</dbReference>
<dbReference type="GO" id="GO:0007267">
    <property type="term" value="P:cell-cell signaling"/>
    <property type="evidence" value="ECO:0007669"/>
    <property type="project" value="InterPro"/>
</dbReference>
<dbReference type="GO" id="GO:0007417">
    <property type="term" value="P:central nervous system development"/>
    <property type="evidence" value="ECO:0007669"/>
    <property type="project" value="UniProtKB-ARBA"/>
</dbReference>
<dbReference type="GO" id="GO:0030182">
    <property type="term" value="P:neuron differentiation"/>
    <property type="evidence" value="ECO:0007669"/>
    <property type="project" value="UniProtKB-ARBA"/>
</dbReference>
<dbReference type="GO" id="GO:0006508">
    <property type="term" value="P:proteolysis"/>
    <property type="evidence" value="ECO:0007669"/>
    <property type="project" value="UniProtKB-KW"/>
</dbReference>
<dbReference type="GO" id="GO:0010468">
    <property type="term" value="P:regulation of gene expression"/>
    <property type="evidence" value="ECO:0007669"/>
    <property type="project" value="TreeGrafter"/>
</dbReference>
<dbReference type="GO" id="GO:0007224">
    <property type="term" value="P:smoothened signaling pathway"/>
    <property type="evidence" value="ECO:0007669"/>
    <property type="project" value="TreeGrafter"/>
</dbReference>
<dbReference type="GO" id="GO:0009888">
    <property type="term" value="P:tissue development"/>
    <property type="evidence" value="ECO:0007669"/>
    <property type="project" value="UniProtKB-ARBA"/>
</dbReference>
<dbReference type="Gene3D" id="3.30.1380.10">
    <property type="match status" value="1"/>
</dbReference>
<dbReference type="InterPro" id="IPR001657">
    <property type="entry name" value="Hedgehog"/>
</dbReference>
<dbReference type="InterPro" id="IPR009045">
    <property type="entry name" value="Hedgehog_sig/DD-Pept_Zn-bd_sf"/>
</dbReference>
<dbReference type="InterPro" id="IPR050387">
    <property type="entry name" value="Hedgehog_Signaling"/>
</dbReference>
<dbReference type="InterPro" id="IPR000320">
    <property type="entry name" value="Hedgehog_signalling_dom"/>
</dbReference>
<dbReference type="PANTHER" id="PTHR11889">
    <property type="entry name" value="HEDGEHOG"/>
    <property type="match status" value="1"/>
</dbReference>
<dbReference type="PANTHER" id="PTHR11889:SF36">
    <property type="entry name" value="SONIC HEDGEHOG PROTEIN"/>
    <property type="match status" value="1"/>
</dbReference>
<dbReference type="Pfam" id="PF01085">
    <property type="entry name" value="HH_signal"/>
    <property type="match status" value="1"/>
</dbReference>
<dbReference type="PRINTS" id="PR00632">
    <property type="entry name" value="SONICHHOG"/>
</dbReference>
<dbReference type="SUPFAM" id="SSF55166">
    <property type="entry name" value="Hedgehog/DD-peptidase"/>
    <property type="match status" value="1"/>
</dbReference>
<accession>O13241</accession>
<accession>O13203</accession>
<accession>O13204</accession>
<accession>O13242</accession>
<gene>
    <name type="primary">shh</name>
</gene>
<name>SHH_DEVDE</name>
<sequence>YGRRRHPKKLTPLAYKQFIPNVAEKTLGASGRYEGKITRNSERFKELTPNYNPDIIFKDEENTVMNHWPGVKLRVTEGWDEDGHHFEESLHYEGRAVDITTSDRDKSKYGTLSRLAVEAGF</sequence>
<proteinExistence type="inferred from homology"/>
<protein>
    <recommendedName>
        <fullName>Sonic hedgehog protein</fullName>
        <shortName>SHH</shortName>
    </recommendedName>
</protein>
<reference key="1">
    <citation type="journal article" date="1996" name="Proc. Natl. Acad. Sci. U.S.A.">
        <title>Evolutionary analyses of hedgehog and Hoxd-10 genes in fish species closely related to the zebrafish.</title>
        <authorList>
            <person name="Zardoya R."/>
            <person name="Abouheif E."/>
            <person name="Meyer A."/>
        </authorList>
    </citation>
    <scope>NUCLEOTIDE SEQUENCE [GENOMIC DNA]</scope>
    <source>
        <tissue>Muscle</tissue>
    </source>
</reference>
<feature type="chain" id="PRO_0000058729" description="Sonic hedgehog protein">
    <location>
        <begin position="1" status="less than"/>
        <end position="121" status="greater than"/>
    </location>
</feature>
<feature type="binding site" evidence="2">
    <location>
        <position position="60"/>
    </location>
    <ligand>
        <name>Ca(2+)</name>
        <dbReference type="ChEBI" id="CHEBI:29108"/>
        <label>1</label>
    </ligand>
</feature>
<feature type="binding site" evidence="2">
    <location>
        <position position="61"/>
    </location>
    <ligand>
        <name>Ca(2+)</name>
        <dbReference type="ChEBI" id="CHEBI:29108"/>
        <label>1</label>
    </ligand>
</feature>
<feature type="binding site" evidence="2">
    <location>
        <position position="61"/>
    </location>
    <ligand>
        <name>Ca(2+)</name>
        <dbReference type="ChEBI" id="CHEBI:29108"/>
        <label>2</label>
    </ligand>
</feature>
<feature type="binding site" evidence="2">
    <location>
        <position position="76"/>
    </location>
    <ligand>
        <name>Ca(2+)</name>
        <dbReference type="ChEBI" id="CHEBI:29108"/>
        <label>1</label>
    </ligand>
</feature>
<feature type="binding site" evidence="2">
    <location>
        <position position="77"/>
    </location>
    <ligand>
        <name>Ca(2+)</name>
        <dbReference type="ChEBI" id="CHEBI:29108"/>
        <label>1</label>
    </ligand>
</feature>
<feature type="binding site" evidence="2">
    <location>
        <position position="77"/>
    </location>
    <ligand>
        <name>Ca(2+)</name>
        <dbReference type="ChEBI" id="CHEBI:29108"/>
        <label>2</label>
    </ligand>
</feature>
<feature type="binding site" evidence="2">
    <location>
        <position position="80"/>
    </location>
    <ligand>
        <name>Ca(2+)</name>
        <dbReference type="ChEBI" id="CHEBI:29108"/>
        <label>2</label>
    </ligand>
</feature>
<feature type="binding site" evidence="2">
    <location>
        <position position="82"/>
    </location>
    <ligand>
        <name>Ca(2+)</name>
        <dbReference type="ChEBI" id="CHEBI:29108"/>
        <label>2</label>
    </ligand>
</feature>
<feature type="binding site" evidence="2">
    <location>
        <position position="91"/>
    </location>
    <ligand>
        <name>Zn(2+)</name>
        <dbReference type="ChEBI" id="CHEBI:29105"/>
    </ligand>
</feature>
<feature type="binding site" evidence="2">
    <location>
        <position position="98"/>
    </location>
    <ligand>
        <name>Zn(2+)</name>
        <dbReference type="ChEBI" id="CHEBI:29105"/>
    </ligand>
</feature>
<feature type="non-consecutive residues" evidence="3">
    <location>
        <begin position="63"/>
        <end position="64"/>
    </location>
</feature>
<feature type="non-terminal residue">
    <location>
        <position position="1"/>
    </location>
</feature>
<feature type="non-terminal residue">
    <location>
        <position position="121"/>
    </location>
</feature>
<organism>
    <name type="scientific">Devario devario</name>
    <name type="common">Bengal danio</name>
    <name type="synonym">Danio devario</name>
    <dbReference type="NCBI Taxonomy" id="46781"/>
    <lineage>
        <taxon>Eukaryota</taxon>
        <taxon>Metazoa</taxon>
        <taxon>Chordata</taxon>
        <taxon>Craniata</taxon>
        <taxon>Vertebrata</taxon>
        <taxon>Euteleostomi</taxon>
        <taxon>Actinopterygii</taxon>
        <taxon>Neopterygii</taxon>
        <taxon>Teleostei</taxon>
        <taxon>Ostariophysi</taxon>
        <taxon>Cypriniformes</taxon>
        <taxon>Danionidae</taxon>
        <taxon>Danioninae</taxon>
        <taxon>Devario</taxon>
    </lineage>
</organism>
<comment type="function">
    <text evidence="1">Intercellular signal essential for a variety of patterning events during development. Signal produced by the notochord that induces somite patterning, dorso-ventral patterning of the brain and early patterning of the developing eyes. Displays floor plate-inducing activity. Binds to the patched (PTC) receptor, which functions in association with smoothened (SMO), to activate the transcription of target genes. In the absence of SHH, PTC represses the constitutive signaling activity of SMO (By similarity).</text>
</comment>
<comment type="subunit">
    <text evidence="1">N-product is active as a multimer.</text>
</comment>
<comment type="subcellular location">
    <subcellularLocation>
        <location evidence="1">Secreted</location>
    </subcellularLocation>
    <subcellularLocation>
        <location evidence="1">Cell membrane</location>
    </subcellularLocation>
    <text evidence="1">Sonic hedgehog protein C-product: Secreted, extracellular space. Sonic hedgehog protein N-product: Cell membrane; Lipid-anchor. The C-terminal peptide diffuses from the cell, while the N-product either remains associated with lipid rafts at the cell surface, or forms freely diffusible active multimers with its hydrophobic lipid-modified N- and C-termini buried inside.</text>
</comment>
<comment type="domain">
    <text evidence="1">The sonic hedgehog protein N-product binds calcium and zinc ions; this stabilizes the protein fold and is essential for protein-protein interactions mediated by this domain.</text>
</comment>
<comment type="PTM">
    <text>The C-terminal domain displays an autoproteolysis activity and a cholesterol transferase activity. Both activities result in the cleavage of the full-length protein and covalent attachment of a cholesterol moiety to the C-terminal of the newly generated N-terminal fragment (N-product). The N-product is the active species in both local and long-range signaling, whereas the C-product has no signaling activity.</text>
</comment>
<comment type="PTM">
    <text evidence="1">Cholesterylation is required for N-product targeting to lipid rafts and multimerization.</text>
</comment>
<comment type="PTM">
    <text evidence="1">N-palmitoylation is required for N-product multimerization and full activity.</text>
</comment>
<comment type="similarity">
    <text evidence="3">Belongs to the hedgehog family.</text>
</comment>
<evidence type="ECO:0000250" key="1"/>
<evidence type="ECO:0000250" key="2">
    <source>
        <dbReference type="UniProtKB" id="Q15465"/>
    </source>
</evidence>
<evidence type="ECO:0000305" key="3"/>
<keyword id="KW-0068">Autocatalytic cleavage</keyword>
<keyword id="KW-0106">Calcium</keyword>
<keyword id="KW-1003">Cell membrane</keyword>
<keyword id="KW-0217">Developmental protein</keyword>
<keyword id="KW-0378">Hydrolase</keyword>
<keyword id="KW-0449">Lipoprotein</keyword>
<keyword id="KW-0472">Membrane</keyword>
<keyword id="KW-0479">Metal-binding</keyword>
<keyword id="KW-0564">Palmitate</keyword>
<keyword id="KW-0645">Protease</keyword>
<keyword id="KW-0964">Secreted</keyword>
<keyword id="KW-0862">Zinc</keyword>